<evidence type="ECO:0000250" key="1"/>
<evidence type="ECO:0000255" key="2">
    <source>
        <dbReference type="PROSITE-ProRule" id="PRU00132"/>
    </source>
</evidence>
<evidence type="ECO:0000256" key="3">
    <source>
        <dbReference type="SAM" id="MobiDB-lite"/>
    </source>
</evidence>
<evidence type="ECO:0000305" key="4"/>
<dbReference type="EMBL" id="AF162444">
    <property type="protein sequence ID" value="AAD48979.1"/>
    <property type="status" value="ALT_SEQ"/>
    <property type="molecule type" value="Genomic_DNA"/>
</dbReference>
<dbReference type="EMBL" id="AL161502">
    <property type="protein sequence ID" value="CAB81048.1"/>
    <property type="status" value="ALT_SEQ"/>
    <property type="molecule type" value="Genomic_DNA"/>
</dbReference>
<dbReference type="EMBL" id="CP002687">
    <property type="protein sequence ID" value="AEE82472.1"/>
    <property type="molecule type" value="Genomic_DNA"/>
</dbReference>
<dbReference type="EMBL" id="AY094468">
    <property type="protein sequence ID" value="AAM19836.1"/>
    <property type="molecule type" value="mRNA"/>
</dbReference>
<dbReference type="EMBL" id="AY143842">
    <property type="protein sequence ID" value="AAN28781.1"/>
    <property type="molecule type" value="mRNA"/>
</dbReference>
<dbReference type="EMBL" id="AY087509">
    <property type="protein sequence ID" value="AAM65052.1"/>
    <property type="molecule type" value="mRNA"/>
</dbReference>
<dbReference type="EMBL" id="AK221803">
    <property type="protein sequence ID" value="BAD93970.1"/>
    <property type="status" value="ALT_INIT"/>
    <property type="molecule type" value="mRNA"/>
</dbReference>
<dbReference type="PIR" id="F85063">
    <property type="entry name" value="F85063"/>
</dbReference>
<dbReference type="RefSeq" id="NP_567287.1">
    <property type="nucleotide sequence ID" value="NM_116745.3"/>
</dbReference>
<dbReference type="SMR" id="Q8LPQ7"/>
<dbReference type="FunCoup" id="Q8LPQ7">
    <property type="interactions" value="2"/>
</dbReference>
<dbReference type="STRING" id="3702.Q8LPQ7"/>
<dbReference type="PaxDb" id="3702-AT4G05060.1"/>
<dbReference type="ProteomicsDB" id="242316"/>
<dbReference type="EnsemblPlants" id="AT4G05060.1">
    <property type="protein sequence ID" value="AT4G05060.1"/>
    <property type="gene ID" value="AT4G05060"/>
</dbReference>
<dbReference type="GeneID" id="825848"/>
<dbReference type="Gramene" id="AT4G05060.1">
    <property type="protein sequence ID" value="AT4G05060.1"/>
    <property type="gene ID" value="AT4G05060"/>
</dbReference>
<dbReference type="KEGG" id="ath:AT4G05060"/>
<dbReference type="Araport" id="AT4G05060"/>
<dbReference type="TAIR" id="AT4G05060"/>
<dbReference type="eggNOG" id="KOG0439">
    <property type="taxonomic scope" value="Eukaryota"/>
</dbReference>
<dbReference type="HOGENOM" id="CLU_067947_0_0_1"/>
<dbReference type="InParanoid" id="Q8LPQ7"/>
<dbReference type="OMA" id="FWANNSK"/>
<dbReference type="PhylomeDB" id="Q8LPQ7"/>
<dbReference type="PRO" id="PR:Q8LPQ7"/>
<dbReference type="Proteomes" id="UP000006548">
    <property type="component" value="Chromosome 4"/>
</dbReference>
<dbReference type="ExpressionAtlas" id="Q8LPQ7">
    <property type="expression patterns" value="baseline and differential"/>
</dbReference>
<dbReference type="GO" id="GO:0005789">
    <property type="term" value="C:endoplasmic reticulum membrane"/>
    <property type="evidence" value="ECO:0007669"/>
    <property type="project" value="InterPro"/>
</dbReference>
<dbReference type="Gene3D" id="2.60.40.10">
    <property type="entry name" value="Immunoglobulins"/>
    <property type="match status" value="1"/>
</dbReference>
<dbReference type="InterPro" id="IPR013783">
    <property type="entry name" value="Ig-like_fold"/>
</dbReference>
<dbReference type="InterPro" id="IPR000535">
    <property type="entry name" value="MSP_dom"/>
</dbReference>
<dbReference type="InterPro" id="IPR008962">
    <property type="entry name" value="PapD-like_sf"/>
</dbReference>
<dbReference type="InterPro" id="IPR016763">
    <property type="entry name" value="VAP"/>
</dbReference>
<dbReference type="PANTHER" id="PTHR10809">
    <property type="entry name" value="VESICLE-ASSOCIATED MEMBRANE PROTEIN-ASSOCIATED PROTEIN"/>
    <property type="match status" value="1"/>
</dbReference>
<dbReference type="PANTHER" id="PTHR10809:SF116">
    <property type="entry name" value="VESICLE-ASSOCIATED PROTEIN 4-3"/>
    <property type="match status" value="1"/>
</dbReference>
<dbReference type="Pfam" id="PF00635">
    <property type="entry name" value="Motile_Sperm"/>
    <property type="match status" value="1"/>
</dbReference>
<dbReference type="SUPFAM" id="SSF49354">
    <property type="entry name" value="PapD-like"/>
    <property type="match status" value="1"/>
</dbReference>
<dbReference type="PROSITE" id="PS50202">
    <property type="entry name" value="MSP"/>
    <property type="match status" value="1"/>
</dbReference>
<keyword id="KW-1185">Reference proteome</keyword>
<organism>
    <name type="scientific">Arabidopsis thaliana</name>
    <name type="common">Mouse-ear cress</name>
    <dbReference type="NCBI Taxonomy" id="3702"/>
    <lineage>
        <taxon>Eukaryota</taxon>
        <taxon>Viridiplantae</taxon>
        <taxon>Streptophyta</taxon>
        <taxon>Embryophyta</taxon>
        <taxon>Tracheophyta</taxon>
        <taxon>Spermatophyta</taxon>
        <taxon>Magnoliopsida</taxon>
        <taxon>eudicotyledons</taxon>
        <taxon>Gunneridae</taxon>
        <taxon>Pentapetalae</taxon>
        <taxon>rosids</taxon>
        <taxon>malvids</taxon>
        <taxon>Brassicales</taxon>
        <taxon>Brassicaceae</taxon>
        <taxon>Camelineae</taxon>
        <taxon>Arabidopsis</taxon>
    </lineage>
</organism>
<protein>
    <recommendedName>
        <fullName>Vesicle-associated protein 4-3</fullName>
    </recommendedName>
    <alternativeName>
        <fullName>Plant VAP homolog 4-3</fullName>
        <shortName>AtPVA43</shortName>
    </alternativeName>
    <alternativeName>
        <fullName>VAMP-associated protein 4-3</fullName>
    </alternativeName>
</protein>
<reference key="1">
    <citation type="journal article" date="1999" name="Nature">
        <title>Sequence and analysis of chromosome 4 of the plant Arabidopsis thaliana.</title>
        <authorList>
            <person name="Mayer K.F.X."/>
            <person name="Schueller C."/>
            <person name="Wambutt R."/>
            <person name="Murphy G."/>
            <person name="Volckaert G."/>
            <person name="Pohl T."/>
            <person name="Duesterhoeft A."/>
            <person name="Stiekema W."/>
            <person name="Entian K.-D."/>
            <person name="Terryn N."/>
            <person name="Harris B."/>
            <person name="Ansorge W."/>
            <person name="Brandt P."/>
            <person name="Grivell L.A."/>
            <person name="Rieger M."/>
            <person name="Weichselgartner M."/>
            <person name="de Simone V."/>
            <person name="Obermaier B."/>
            <person name="Mache R."/>
            <person name="Mueller M."/>
            <person name="Kreis M."/>
            <person name="Delseny M."/>
            <person name="Puigdomenech P."/>
            <person name="Watson M."/>
            <person name="Schmidtheini T."/>
            <person name="Reichert B."/>
            <person name="Portetelle D."/>
            <person name="Perez-Alonso M."/>
            <person name="Boutry M."/>
            <person name="Bancroft I."/>
            <person name="Vos P."/>
            <person name="Hoheisel J."/>
            <person name="Zimmermann W."/>
            <person name="Wedler H."/>
            <person name="Ridley P."/>
            <person name="Langham S.-A."/>
            <person name="McCullagh B."/>
            <person name="Bilham L."/>
            <person name="Robben J."/>
            <person name="van der Schueren J."/>
            <person name="Grymonprez B."/>
            <person name="Chuang Y.-J."/>
            <person name="Vandenbussche F."/>
            <person name="Braeken M."/>
            <person name="Weltjens I."/>
            <person name="Voet M."/>
            <person name="Bastiaens I."/>
            <person name="Aert R."/>
            <person name="Defoor E."/>
            <person name="Weitzenegger T."/>
            <person name="Bothe G."/>
            <person name="Ramsperger U."/>
            <person name="Hilbert H."/>
            <person name="Braun M."/>
            <person name="Holzer E."/>
            <person name="Brandt A."/>
            <person name="Peters S."/>
            <person name="van Staveren M."/>
            <person name="Dirkse W."/>
            <person name="Mooijman P."/>
            <person name="Klein Lankhorst R."/>
            <person name="Rose M."/>
            <person name="Hauf J."/>
            <person name="Koetter P."/>
            <person name="Berneiser S."/>
            <person name="Hempel S."/>
            <person name="Feldpausch M."/>
            <person name="Lamberth S."/>
            <person name="Van den Daele H."/>
            <person name="De Keyser A."/>
            <person name="Buysshaert C."/>
            <person name="Gielen J."/>
            <person name="Villarroel R."/>
            <person name="De Clercq R."/>
            <person name="van Montagu M."/>
            <person name="Rogers J."/>
            <person name="Cronin A."/>
            <person name="Quail M.A."/>
            <person name="Bray-Allen S."/>
            <person name="Clark L."/>
            <person name="Doggett J."/>
            <person name="Hall S."/>
            <person name="Kay M."/>
            <person name="Lennard N."/>
            <person name="McLay K."/>
            <person name="Mayes R."/>
            <person name="Pettett A."/>
            <person name="Rajandream M.A."/>
            <person name="Lyne M."/>
            <person name="Benes V."/>
            <person name="Rechmann S."/>
            <person name="Borkova D."/>
            <person name="Bloecker H."/>
            <person name="Scharfe M."/>
            <person name="Grimm M."/>
            <person name="Loehnert T.-H."/>
            <person name="Dose S."/>
            <person name="de Haan M."/>
            <person name="Maarse A.C."/>
            <person name="Schaefer M."/>
            <person name="Mueller-Auer S."/>
            <person name="Gabel C."/>
            <person name="Fuchs M."/>
            <person name="Fartmann B."/>
            <person name="Granderath K."/>
            <person name="Dauner D."/>
            <person name="Herzl A."/>
            <person name="Neumann S."/>
            <person name="Argiriou A."/>
            <person name="Vitale D."/>
            <person name="Liguori R."/>
            <person name="Piravandi E."/>
            <person name="Massenet O."/>
            <person name="Quigley F."/>
            <person name="Clabauld G."/>
            <person name="Muendlein A."/>
            <person name="Felber R."/>
            <person name="Schnabl S."/>
            <person name="Hiller R."/>
            <person name="Schmidt W."/>
            <person name="Lecharny A."/>
            <person name="Aubourg S."/>
            <person name="Chefdor F."/>
            <person name="Cooke R."/>
            <person name="Berger C."/>
            <person name="Monfort A."/>
            <person name="Casacuberta E."/>
            <person name="Gibbons T."/>
            <person name="Weber N."/>
            <person name="Vandenbol M."/>
            <person name="Bargues M."/>
            <person name="Terol J."/>
            <person name="Torres A."/>
            <person name="Perez-Perez A."/>
            <person name="Purnelle B."/>
            <person name="Bent E."/>
            <person name="Johnson S."/>
            <person name="Tacon D."/>
            <person name="Jesse T."/>
            <person name="Heijnen L."/>
            <person name="Schwarz S."/>
            <person name="Scholler P."/>
            <person name="Heber S."/>
            <person name="Francs P."/>
            <person name="Bielke C."/>
            <person name="Frishman D."/>
            <person name="Haase D."/>
            <person name="Lemcke K."/>
            <person name="Mewes H.-W."/>
            <person name="Stocker S."/>
            <person name="Zaccaria P."/>
            <person name="Bevan M."/>
            <person name="Wilson R.K."/>
            <person name="de la Bastide M."/>
            <person name="Habermann K."/>
            <person name="Parnell L."/>
            <person name="Dedhia N."/>
            <person name="Gnoj L."/>
            <person name="Schutz K."/>
            <person name="Huang E."/>
            <person name="Spiegel L."/>
            <person name="Sekhon M."/>
            <person name="Murray J."/>
            <person name="Sheet P."/>
            <person name="Cordes M."/>
            <person name="Abu-Threideh J."/>
            <person name="Stoneking T."/>
            <person name="Kalicki J."/>
            <person name="Graves T."/>
            <person name="Harmon G."/>
            <person name="Edwards J."/>
            <person name="Latreille P."/>
            <person name="Courtney L."/>
            <person name="Cloud J."/>
            <person name="Abbott A."/>
            <person name="Scott K."/>
            <person name="Johnson D."/>
            <person name="Minx P."/>
            <person name="Bentley D."/>
            <person name="Fulton B."/>
            <person name="Miller N."/>
            <person name="Greco T."/>
            <person name="Kemp K."/>
            <person name="Kramer J."/>
            <person name="Fulton L."/>
            <person name="Mardis E."/>
            <person name="Dante M."/>
            <person name="Pepin K."/>
            <person name="Hillier L.W."/>
            <person name="Nelson J."/>
            <person name="Spieth J."/>
            <person name="Ryan E."/>
            <person name="Andrews S."/>
            <person name="Geisel C."/>
            <person name="Layman D."/>
            <person name="Du H."/>
            <person name="Ali J."/>
            <person name="Berghoff A."/>
            <person name="Jones K."/>
            <person name="Drone K."/>
            <person name="Cotton M."/>
            <person name="Joshu C."/>
            <person name="Antonoiu B."/>
            <person name="Zidanic M."/>
            <person name="Strong C."/>
            <person name="Sun H."/>
            <person name="Lamar B."/>
            <person name="Yordan C."/>
            <person name="Ma P."/>
            <person name="Zhong J."/>
            <person name="Preston R."/>
            <person name="Vil D."/>
            <person name="Shekher M."/>
            <person name="Matero A."/>
            <person name="Shah R."/>
            <person name="Swaby I.K."/>
            <person name="O'Shaughnessy A."/>
            <person name="Rodriguez M."/>
            <person name="Hoffman J."/>
            <person name="Till S."/>
            <person name="Granat S."/>
            <person name="Shohdy N."/>
            <person name="Hasegawa A."/>
            <person name="Hameed A."/>
            <person name="Lodhi M."/>
            <person name="Johnson A."/>
            <person name="Chen E."/>
            <person name="Marra M.A."/>
            <person name="Martienssen R."/>
            <person name="McCombie W.R."/>
        </authorList>
    </citation>
    <scope>NUCLEOTIDE SEQUENCE [LARGE SCALE GENOMIC DNA]</scope>
    <source>
        <strain>cv. Columbia</strain>
    </source>
</reference>
<reference key="2">
    <citation type="journal article" date="2017" name="Plant J.">
        <title>Araport11: a complete reannotation of the Arabidopsis thaliana reference genome.</title>
        <authorList>
            <person name="Cheng C.Y."/>
            <person name="Krishnakumar V."/>
            <person name="Chan A.P."/>
            <person name="Thibaud-Nissen F."/>
            <person name="Schobel S."/>
            <person name="Town C.D."/>
        </authorList>
    </citation>
    <scope>GENOME REANNOTATION</scope>
    <source>
        <strain>cv. Columbia</strain>
    </source>
</reference>
<reference key="3">
    <citation type="journal article" date="2003" name="Science">
        <title>Empirical analysis of transcriptional activity in the Arabidopsis genome.</title>
        <authorList>
            <person name="Yamada K."/>
            <person name="Lim J."/>
            <person name="Dale J.M."/>
            <person name="Chen H."/>
            <person name="Shinn P."/>
            <person name="Palm C.J."/>
            <person name="Southwick A.M."/>
            <person name="Wu H.C."/>
            <person name="Kim C.J."/>
            <person name="Nguyen M."/>
            <person name="Pham P.K."/>
            <person name="Cheuk R.F."/>
            <person name="Karlin-Newmann G."/>
            <person name="Liu S.X."/>
            <person name="Lam B."/>
            <person name="Sakano H."/>
            <person name="Wu T."/>
            <person name="Yu G."/>
            <person name="Miranda M."/>
            <person name="Quach H.L."/>
            <person name="Tripp M."/>
            <person name="Chang C.H."/>
            <person name="Lee J.M."/>
            <person name="Toriumi M.J."/>
            <person name="Chan M.M."/>
            <person name="Tang C.C."/>
            <person name="Onodera C.S."/>
            <person name="Deng J.M."/>
            <person name="Akiyama K."/>
            <person name="Ansari Y."/>
            <person name="Arakawa T."/>
            <person name="Banh J."/>
            <person name="Banno F."/>
            <person name="Bowser L."/>
            <person name="Brooks S.Y."/>
            <person name="Carninci P."/>
            <person name="Chao Q."/>
            <person name="Choy N."/>
            <person name="Enju A."/>
            <person name="Goldsmith A.D."/>
            <person name="Gurjal M."/>
            <person name="Hansen N.F."/>
            <person name="Hayashizaki Y."/>
            <person name="Johnson-Hopson C."/>
            <person name="Hsuan V.W."/>
            <person name="Iida K."/>
            <person name="Karnes M."/>
            <person name="Khan S."/>
            <person name="Koesema E."/>
            <person name="Ishida J."/>
            <person name="Jiang P.X."/>
            <person name="Jones T."/>
            <person name="Kawai J."/>
            <person name="Kamiya A."/>
            <person name="Meyers C."/>
            <person name="Nakajima M."/>
            <person name="Narusaka M."/>
            <person name="Seki M."/>
            <person name="Sakurai T."/>
            <person name="Satou M."/>
            <person name="Tamse R."/>
            <person name="Vaysberg M."/>
            <person name="Wallender E.K."/>
            <person name="Wong C."/>
            <person name="Yamamura Y."/>
            <person name="Yuan S."/>
            <person name="Shinozaki K."/>
            <person name="Davis R.W."/>
            <person name="Theologis A."/>
            <person name="Ecker J.R."/>
        </authorList>
    </citation>
    <scope>NUCLEOTIDE SEQUENCE [LARGE SCALE MRNA]</scope>
    <source>
        <strain>cv. Columbia</strain>
    </source>
</reference>
<reference key="4">
    <citation type="submission" date="2002-03" db="EMBL/GenBank/DDBJ databases">
        <title>Full-length cDNA from Arabidopsis thaliana.</title>
        <authorList>
            <person name="Brover V.V."/>
            <person name="Troukhan M.E."/>
            <person name="Alexandrov N.A."/>
            <person name="Lu Y.-P."/>
            <person name="Flavell R.B."/>
            <person name="Feldmann K.A."/>
        </authorList>
    </citation>
    <scope>NUCLEOTIDE SEQUENCE [LARGE SCALE MRNA]</scope>
</reference>
<reference key="5">
    <citation type="submission" date="2005-03" db="EMBL/GenBank/DDBJ databases">
        <title>Large-scale analysis of RIKEN Arabidopsis full-length (RAFL) cDNAs.</title>
        <authorList>
            <person name="Totoki Y."/>
            <person name="Seki M."/>
            <person name="Ishida J."/>
            <person name="Nakajima M."/>
            <person name="Enju A."/>
            <person name="Kamiya A."/>
            <person name="Narusaka M."/>
            <person name="Shin-i T."/>
            <person name="Nakagawa M."/>
            <person name="Sakamoto N."/>
            <person name="Oishi K."/>
            <person name="Kohara Y."/>
            <person name="Kobayashi M."/>
            <person name="Toyoda A."/>
            <person name="Sakaki Y."/>
            <person name="Sakurai T."/>
            <person name="Iida K."/>
            <person name="Akiyama K."/>
            <person name="Satou M."/>
            <person name="Toyoda T."/>
            <person name="Konagaya A."/>
            <person name="Carninci P."/>
            <person name="Kawai J."/>
            <person name="Hayashizaki Y."/>
            <person name="Shinozaki K."/>
        </authorList>
    </citation>
    <scope>NUCLEOTIDE SEQUENCE [LARGE SCALE MRNA] OF 166-287</scope>
    <source>
        <strain>cv. Columbia</strain>
    </source>
</reference>
<name>VAP43_ARATH</name>
<comment type="function">
    <text evidence="1">May play a role in vesicle trafficking.</text>
</comment>
<comment type="similarity">
    <text evidence="4">Belongs to the VAMP-associated protein (VAP) (TC 9.B.17) family.</text>
</comment>
<comment type="sequence caution" evidence="4">
    <conflict type="erroneous gene model prediction">
        <sequence resource="EMBL-CDS" id="AAD48979"/>
    </conflict>
</comment>
<comment type="sequence caution" evidence="4">
    <conflict type="erroneous initiation">
        <sequence resource="EMBL-CDS" id="BAD93970"/>
    </conflict>
    <text>Truncated N-terminus.</text>
</comment>
<comment type="sequence caution" evidence="4">
    <conflict type="erroneous gene model prediction">
        <sequence resource="EMBL-CDS" id="CAB81048"/>
    </conflict>
</comment>
<feature type="chain" id="PRO_0000402178" description="Vesicle-associated protein 4-3">
    <location>
        <begin position="1"/>
        <end position="287"/>
    </location>
</feature>
<feature type="domain" description="MSP" evidence="2">
    <location>
        <begin position="99"/>
        <end position="221"/>
    </location>
</feature>
<feature type="region of interest" description="Disordered" evidence="3">
    <location>
        <begin position="1"/>
        <end position="45"/>
    </location>
</feature>
<feature type="compositionally biased region" description="Basic and acidic residues" evidence="3">
    <location>
        <begin position="1"/>
        <end position="14"/>
    </location>
</feature>
<feature type="compositionally biased region" description="Low complexity" evidence="3">
    <location>
        <begin position="25"/>
        <end position="45"/>
    </location>
</feature>
<gene>
    <name type="primary">PVA43</name>
    <name type="ordered locus">At4g05060</name>
    <name type="ORF">C17L7.8</name>
    <name type="ORF">T32N4.12</name>
</gene>
<sequence length="287" mass="31963">MALTEDKSDSDGRRWGKFKLPFRNSNSQAPSASSSSSMATSSSSVTSSHLNQNYIHQSRHFQYHGPPVVEGLGQNHHQSAATIPSMSSVARSLLPTKRRLKLDPSAKLYFPYEPGKQVRSAIKIKNTSKSHVAFKFQTTVPKSCFMRPAGAILAPGEEIIATVFKFVEPPENNEKPMEQKSGVKFKIMSLKMKVPTDYMPELFEEQKDHVSEEQVMRVVFLDPENPNSMMEKLKSQLAEADAADEARKKASEGIVGPKPIGEGLVIDEWKQRRERYLAQQQGGVDAA</sequence>
<accession>Q8LPQ7</accession>
<accession>Q56X74</accession>
<accession>Q8LAZ8</accession>
<accession>Q9S9T2</accession>
<proteinExistence type="evidence at transcript level"/>